<feature type="chain" id="PRO_0000405669" description="RNA polymerase II degradation factor 1">
    <location>
        <begin position="1"/>
        <end position="733"/>
    </location>
</feature>
<feature type="domain" description="CUE" evidence="2">
    <location>
        <begin position="24"/>
        <end position="66"/>
    </location>
</feature>
<feature type="region of interest" description="Disordered" evidence="3">
    <location>
        <begin position="1"/>
        <end position="24"/>
    </location>
</feature>
<feature type="region of interest" description="Disordered" evidence="3">
    <location>
        <begin position="61"/>
        <end position="343"/>
    </location>
</feature>
<feature type="region of interest" description="Disordered" evidence="3">
    <location>
        <begin position="366"/>
        <end position="497"/>
    </location>
</feature>
<feature type="region of interest" description="Disordered" evidence="3">
    <location>
        <begin position="518"/>
        <end position="590"/>
    </location>
</feature>
<feature type="region of interest" description="Disordered" evidence="3">
    <location>
        <begin position="633"/>
        <end position="682"/>
    </location>
</feature>
<feature type="compositionally biased region" description="Polar residues" evidence="3">
    <location>
        <begin position="1"/>
        <end position="14"/>
    </location>
</feature>
<feature type="compositionally biased region" description="Basic and acidic residues" evidence="3">
    <location>
        <begin position="68"/>
        <end position="83"/>
    </location>
</feature>
<feature type="compositionally biased region" description="Low complexity" evidence="3">
    <location>
        <begin position="84"/>
        <end position="103"/>
    </location>
</feature>
<feature type="compositionally biased region" description="Polar residues" evidence="3">
    <location>
        <begin position="104"/>
        <end position="117"/>
    </location>
</feature>
<feature type="compositionally biased region" description="Low complexity" evidence="3">
    <location>
        <begin position="158"/>
        <end position="171"/>
    </location>
</feature>
<feature type="compositionally biased region" description="Low complexity" evidence="3">
    <location>
        <begin position="180"/>
        <end position="198"/>
    </location>
</feature>
<feature type="compositionally biased region" description="Low complexity" evidence="3">
    <location>
        <begin position="206"/>
        <end position="223"/>
    </location>
</feature>
<feature type="compositionally biased region" description="Low complexity" evidence="3">
    <location>
        <begin position="243"/>
        <end position="278"/>
    </location>
</feature>
<feature type="compositionally biased region" description="Polar residues" evidence="3">
    <location>
        <begin position="279"/>
        <end position="293"/>
    </location>
</feature>
<feature type="compositionally biased region" description="Basic and acidic residues" evidence="3">
    <location>
        <begin position="318"/>
        <end position="333"/>
    </location>
</feature>
<feature type="compositionally biased region" description="Low complexity" evidence="3">
    <location>
        <begin position="382"/>
        <end position="404"/>
    </location>
</feature>
<feature type="compositionally biased region" description="Low complexity" evidence="3">
    <location>
        <begin position="424"/>
        <end position="448"/>
    </location>
</feature>
<feature type="compositionally biased region" description="Low complexity" evidence="3">
    <location>
        <begin position="457"/>
        <end position="497"/>
    </location>
</feature>
<feature type="compositionally biased region" description="Low complexity" evidence="3">
    <location>
        <begin position="542"/>
        <end position="557"/>
    </location>
</feature>
<feature type="compositionally biased region" description="Low complexity" evidence="3">
    <location>
        <begin position="580"/>
        <end position="590"/>
    </location>
</feature>
<comment type="function">
    <text evidence="1">Recruits the ubiquitination machinery to RNA polymerase II for polyubiquitination, removal and degradation, when the transcription-coupled repair (TCR) factor RAD26 fails to efficiently displace stalled RNA polymerase II. Also involved in telomere length regulation. Binds DNA.</text>
</comment>
<comment type="subunit">
    <text evidence="1">Homodimer; may form higher order oligomers. Interacts with the large RNA polymerase II subunit RPO21; the interaction is direct and serves to bridge RPO21 to the Elongin complex in a manner dependent on transcription stress. Interacts with RAD26.</text>
</comment>
<comment type="subcellular location">
    <subcellularLocation>
        <location evidence="1">Cytoplasm</location>
    </subcellularLocation>
    <subcellularLocation>
        <location evidence="1">Nucleus</location>
    </subcellularLocation>
    <subcellularLocation>
        <location evidence="1">Chromosome</location>
        <location evidence="1">Telomere</location>
    </subcellularLocation>
    <text evidence="1">During transcription stress, localizes to the nucleus following proteolytic cleavage by the proteasome.</text>
</comment>
<comment type="PTM">
    <text evidence="1">Ubiquitinated.</text>
</comment>
<comment type="PTM">
    <text evidence="1">Proteolytically cleaved by the proteasome in response to transcription stress; the resulting N-terminal form constitutes the activated nuclear form and the C-terminal portion is degraded.</text>
</comment>
<comment type="similarity">
    <text evidence="4">Belongs to the DEF1 family.</text>
</comment>
<sequence>MSTQSRKSNSSKQPHSTHKKLDPELKFKLETLTELFPDWTNDDLIDLVQEYEDLETIIDKITSGAATKWDEVKKPSKKERQREQQQQQQQQQQAQLAAQQATQPSSQSHHNNHTHISPSHDGDHSHSAQTSHNHHQSKSSKFSSRERDSSSRSHKKSSNNAAASGPNGSGNARRERASGASRVPATSAASAASANASAVQPDHLKTAVSAAKTASSTSWAAMASDKKAAKQSAQAKKAEEQQQEQQSPQQAQHESTAPSPQQEAEPQSQSQSKSQPQSDNKSAESVSSTSTPATEDLEKPKKMTWAAIVKPKTKPSVKKSEPLEELEDLKREAAQISTEEPEAAEKVIEQVIEQVEQTPEEVVEQVEVTVVPEEVSQESEEASAQQEETAEPAAPVVPAEPEAASSEEKAAPAQPEQGTYSPVAQQQQPQQQQQPQQQQQAQQQQQQPTAYSEDKQSQAQQAQSQQAQSFYQAQPQQYGSQTPQQTPQTLQQQNAAAAAAAAQQQYYMYQNQFPGYSYPGMFDSQSYPAGYGQQYAPQSQNGSQPQTASTQQSQSGQYGVPPGYASTGRDLGAASPMAAQVQLQQQQQQQPYGGSFMPYYHFYQQSFPYGQPQYGMAGQYPYQVPKAYNYMNQYQPQQGGQTPSSQSQQGEEAQQSAQQGQATASQGQAQGSGSQGQAQTNAQQQAQLQQYYQFQQQQQQQQAAAAAAAAQQGGVPYGYSGYDFSSQATRGFY</sequence>
<dbReference type="EMBL" id="CU928168">
    <property type="protein sequence ID" value="CAR22641.1"/>
    <property type="molecule type" value="Genomic_DNA"/>
</dbReference>
<dbReference type="RefSeq" id="XP_002553079.1">
    <property type="nucleotide sequence ID" value="XM_002553033.1"/>
</dbReference>
<dbReference type="SMR" id="C5DGU9"/>
<dbReference type="FunCoup" id="C5DGU9">
    <property type="interactions" value="305"/>
</dbReference>
<dbReference type="STRING" id="559295.C5DGU9"/>
<dbReference type="GeneID" id="8295315"/>
<dbReference type="KEGG" id="lth:KLTH0D08470g"/>
<dbReference type="eggNOG" id="ENOG502S359">
    <property type="taxonomic scope" value="Eukaryota"/>
</dbReference>
<dbReference type="HOGENOM" id="CLU_023119_0_0_1"/>
<dbReference type="InParanoid" id="C5DGU9"/>
<dbReference type="OMA" id="MYQNQFP"/>
<dbReference type="OrthoDB" id="5396806at2759"/>
<dbReference type="Proteomes" id="UP000002036">
    <property type="component" value="Chromosome D"/>
</dbReference>
<dbReference type="GO" id="GO:0000781">
    <property type="term" value="C:chromosome, telomeric region"/>
    <property type="evidence" value="ECO:0007669"/>
    <property type="project" value="UniProtKB-SubCell"/>
</dbReference>
<dbReference type="GO" id="GO:0005737">
    <property type="term" value="C:cytoplasm"/>
    <property type="evidence" value="ECO:0007669"/>
    <property type="project" value="UniProtKB-SubCell"/>
</dbReference>
<dbReference type="GO" id="GO:0005634">
    <property type="term" value="C:nucleus"/>
    <property type="evidence" value="ECO:0007669"/>
    <property type="project" value="UniProtKB-SubCell"/>
</dbReference>
<dbReference type="GO" id="GO:0003677">
    <property type="term" value="F:DNA binding"/>
    <property type="evidence" value="ECO:0007669"/>
    <property type="project" value="UniProtKB-KW"/>
</dbReference>
<dbReference type="GO" id="GO:0043130">
    <property type="term" value="F:ubiquitin binding"/>
    <property type="evidence" value="ECO:0007669"/>
    <property type="project" value="InterPro"/>
</dbReference>
<dbReference type="GO" id="GO:0006281">
    <property type="term" value="P:DNA repair"/>
    <property type="evidence" value="ECO:0007669"/>
    <property type="project" value="UniProtKB-KW"/>
</dbReference>
<dbReference type="CDD" id="cd14368">
    <property type="entry name" value="CUE_DEF1_like"/>
    <property type="match status" value="1"/>
</dbReference>
<dbReference type="InterPro" id="IPR003892">
    <property type="entry name" value="CUE"/>
</dbReference>
<dbReference type="InterPro" id="IPR041803">
    <property type="entry name" value="DEF1_CUE"/>
</dbReference>
<dbReference type="PROSITE" id="PS51140">
    <property type="entry name" value="CUE"/>
    <property type="match status" value="1"/>
</dbReference>
<keyword id="KW-0158">Chromosome</keyword>
<keyword id="KW-0963">Cytoplasm</keyword>
<keyword id="KW-0227">DNA damage</keyword>
<keyword id="KW-0234">DNA repair</keyword>
<keyword id="KW-0238">DNA-binding</keyword>
<keyword id="KW-0539">Nucleus</keyword>
<keyword id="KW-1185">Reference proteome</keyword>
<keyword id="KW-0779">Telomere</keyword>
<keyword id="KW-0832">Ubl conjugation</keyword>
<keyword id="KW-0833">Ubl conjugation pathway</keyword>
<proteinExistence type="inferred from homology"/>
<accession>C5DGU9</accession>
<name>DEF1_LACTC</name>
<gene>
    <name type="primary">DEF1</name>
    <name type="ordered locus">KLTH0D08470g</name>
</gene>
<evidence type="ECO:0000250" key="1">
    <source>
        <dbReference type="UniProtKB" id="P35732"/>
    </source>
</evidence>
<evidence type="ECO:0000255" key="2">
    <source>
        <dbReference type="PROSITE-ProRule" id="PRU00468"/>
    </source>
</evidence>
<evidence type="ECO:0000256" key="3">
    <source>
        <dbReference type="SAM" id="MobiDB-lite"/>
    </source>
</evidence>
<evidence type="ECO:0000305" key="4"/>
<organism>
    <name type="scientific">Lachancea thermotolerans (strain ATCC 56472 / CBS 6340 / NRRL Y-8284)</name>
    <name type="common">Yeast</name>
    <name type="synonym">Kluyveromyces thermotolerans</name>
    <dbReference type="NCBI Taxonomy" id="559295"/>
    <lineage>
        <taxon>Eukaryota</taxon>
        <taxon>Fungi</taxon>
        <taxon>Dikarya</taxon>
        <taxon>Ascomycota</taxon>
        <taxon>Saccharomycotina</taxon>
        <taxon>Saccharomycetes</taxon>
        <taxon>Saccharomycetales</taxon>
        <taxon>Saccharomycetaceae</taxon>
        <taxon>Lachancea</taxon>
    </lineage>
</organism>
<protein>
    <recommendedName>
        <fullName>RNA polymerase II degradation factor 1</fullName>
    </recommendedName>
</protein>
<reference key="1">
    <citation type="journal article" date="2009" name="Genome Res.">
        <title>Comparative genomics of protoploid Saccharomycetaceae.</title>
        <authorList>
            <consortium name="The Genolevures Consortium"/>
            <person name="Souciet J.-L."/>
            <person name="Dujon B."/>
            <person name="Gaillardin C."/>
            <person name="Johnston M."/>
            <person name="Baret P.V."/>
            <person name="Cliften P."/>
            <person name="Sherman D.J."/>
            <person name="Weissenbach J."/>
            <person name="Westhof E."/>
            <person name="Wincker P."/>
            <person name="Jubin C."/>
            <person name="Poulain J."/>
            <person name="Barbe V."/>
            <person name="Segurens B."/>
            <person name="Artiguenave F."/>
            <person name="Anthouard V."/>
            <person name="Vacherie B."/>
            <person name="Val M.-E."/>
            <person name="Fulton R.S."/>
            <person name="Minx P."/>
            <person name="Wilson R."/>
            <person name="Durrens P."/>
            <person name="Jean G."/>
            <person name="Marck C."/>
            <person name="Martin T."/>
            <person name="Nikolski M."/>
            <person name="Rolland T."/>
            <person name="Seret M.-L."/>
            <person name="Casaregola S."/>
            <person name="Despons L."/>
            <person name="Fairhead C."/>
            <person name="Fischer G."/>
            <person name="Lafontaine I."/>
            <person name="Leh V."/>
            <person name="Lemaire M."/>
            <person name="de Montigny J."/>
            <person name="Neuveglise C."/>
            <person name="Thierry A."/>
            <person name="Blanc-Lenfle I."/>
            <person name="Bleykasten C."/>
            <person name="Diffels J."/>
            <person name="Fritsch E."/>
            <person name="Frangeul L."/>
            <person name="Goeffon A."/>
            <person name="Jauniaux N."/>
            <person name="Kachouri-Lafond R."/>
            <person name="Payen C."/>
            <person name="Potier S."/>
            <person name="Pribylova L."/>
            <person name="Ozanne C."/>
            <person name="Richard G.-F."/>
            <person name="Sacerdot C."/>
            <person name="Straub M.-L."/>
            <person name="Talla E."/>
        </authorList>
    </citation>
    <scope>NUCLEOTIDE SEQUENCE [LARGE SCALE GENOMIC DNA]</scope>
    <source>
        <strain>ATCC 56472 / CBS 6340 / NRRL Y-8284</strain>
    </source>
</reference>